<name>CFR_SHOC1</name>
<accession>Q5WJ42</accession>
<sequence length="350" mass="39857">MKVVNHATKYERLKHFLNALNEPTYRYKQITEAIFKHRIGAFNKMTTLPKALRESLINEFGPSILTVEPVLETTSQQVTKVLLKVAGNNQVEAVRMHYEAGWESFCISSQCGCGLGCTFCSTGAIGLKQNLSADEMTDQLLYFYLKGHSLDSVSFMGMGEALANVRIFDALNVLVDRQLFALSPRRITVSTVGIIPNIQRMTSSFPQMNLTFSLHSPFHDQRSELMPINNKYPLDQVMNVLDQHIHETGRKVYIAYVMLRGVNDSEKHAEALVKRILNNRYPHLYHVNLIRYNPTVGTPENYGQTIEEKLQTFYRVVKSARIPVTIRSQFGREIDAACGQLYGQYQAKKR</sequence>
<organism>
    <name type="scientific">Shouchella clausii (strain KSM-K16)</name>
    <name type="common">Alkalihalobacillus clausii</name>
    <dbReference type="NCBI Taxonomy" id="66692"/>
    <lineage>
        <taxon>Bacteria</taxon>
        <taxon>Bacillati</taxon>
        <taxon>Bacillota</taxon>
        <taxon>Bacilli</taxon>
        <taxon>Bacillales</taxon>
        <taxon>Bacillaceae</taxon>
        <taxon>Shouchella</taxon>
    </lineage>
</organism>
<dbReference type="EC" id="2.1.1.224" evidence="1"/>
<dbReference type="EMBL" id="AP006627">
    <property type="protein sequence ID" value="BAD63613.1"/>
    <property type="molecule type" value="Genomic_DNA"/>
</dbReference>
<dbReference type="RefSeq" id="WP_011245929.1">
    <property type="nucleotide sequence ID" value="NG_062348.1"/>
</dbReference>
<dbReference type="SMR" id="Q5WJ42"/>
<dbReference type="STRING" id="66692.ABC1074"/>
<dbReference type="CARD" id="ARO:3002816">
    <property type="molecule name" value="clbC"/>
    <property type="mechanism identifier" value="ARO:0001001"/>
    <property type="mechanism name" value="antibiotic target alteration"/>
</dbReference>
<dbReference type="KEGG" id="bcl:ABC1074"/>
<dbReference type="eggNOG" id="COG0820">
    <property type="taxonomic scope" value="Bacteria"/>
</dbReference>
<dbReference type="HOGENOM" id="CLU_029101_0_2_9"/>
<dbReference type="OrthoDB" id="9793973at2"/>
<dbReference type="BRENDA" id="2.1.1.224">
    <property type="organism ID" value="7525"/>
</dbReference>
<dbReference type="Proteomes" id="UP000001168">
    <property type="component" value="Chromosome"/>
</dbReference>
<dbReference type="GO" id="GO:0005737">
    <property type="term" value="C:cytoplasm"/>
    <property type="evidence" value="ECO:0007669"/>
    <property type="project" value="UniProtKB-SubCell"/>
</dbReference>
<dbReference type="GO" id="GO:0051539">
    <property type="term" value="F:4 iron, 4 sulfur cluster binding"/>
    <property type="evidence" value="ECO:0007669"/>
    <property type="project" value="UniProtKB-UniRule"/>
</dbReference>
<dbReference type="GO" id="GO:0046872">
    <property type="term" value="F:metal ion binding"/>
    <property type="evidence" value="ECO:0007669"/>
    <property type="project" value="UniProtKB-KW"/>
</dbReference>
<dbReference type="GO" id="GO:0016433">
    <property type="term" value="F:rRNA (adenine) methyltransferase activity"/>
    <property type="evidence" value="ECO:0007669"/>
    <property type="project" value="UniProtKB-UniRule"/>
</dbReference>
<dbReference type="GO" id="GO:0019843">
    <property type="term" value="F:rRNA binding"/>
    <property type="evidence" value="ECO:0007669"/>
    <property type="project" value="UniProtKB-UniRule"/>
</dbReference>
<dbReference type="GO" id="GO:0046677">
    <property type="term" value="P:response to antibiotic"/>
    <property type="evidence" value="ECO:0007669"/>
    <property type="project" value="UniProtKB-KW"/>
</dbReference>
<dbReference type="GO" id="GO:0070475">
    <property type="term" value="P:rRNA base methylation"/>
    <property type="evidence" value="ECO:0007669"/>
    <property type="project" value="UniProtKB-UniRule"/>
</dbReference>
<dbReference type="GO" id="GO:0030488">
    <property type="term" value="P:tRNA methylation"/>
    <property type="evidence" value="ECO:0007669"/>
    <property type="project" value="TreeGrafter"/>
</dbReference>
<dbReference type="CDD" id="cd01335">
    <property type="entry name" value="Radical_SAM"/>
    <property type="match status" value="1"/>
</dbReference>
<dbReference type="Gene3D" id="1.10.150.530">
    <property type="match status" value="1"/>
</dbReference>
<dbReference type="Gene3D" id="3.20.20.70">
    <property type="entry name" value="Aldolase class I"/>
    <property type="match status" value="1"/>
</dbReference>
<dbReference type="HAMAP" id="MF_01873">
    <property type="entry name" value="23SrRNA_methyltr_Cfr"/>
    <property type="match status" value="1"/>
</dbReference>
<dbReference type="InterPro" id="IPR013785">
    <property type="entry name" value="Aldolase_TIM"/>
</dbReference>
<dbReference type="InterPro" id="IPR040072">
    <property type="entry name" value="Methyltransferase_A"/>
</dbReference>
<dbReference type="InterPro" id="IPR048641">
    <property type="entry name" value="RlmN_N"/>
</dbReference>
<dbReference type="InterPro" id="IPR022881">
    <property type="entry name" value="rRNA_lsu_MeTfrase_Cfr"/>
</dbReference>
<dbReference type="InterPro" id="IPR004383">
    <property type="entry name" value="rRNA_lsu_MTrfase_RlmN/Cfr"/>
</dbReference>
<dbReference type="InterPro" id="IPR007197">
    <property type="entry name" value="rSAM"/>
</dbReference>
<dbReference type="NCBIfam" id="NF000424">
    <property type="entry name" value="CfrAB"/>
    <property type="match status" value="1"/>
</dbReference>
<dbReference type="NCBIfam" id="NF011024">
    <property type="entry name" value="PRK14453.1"/>
    <property type="match status" value="1"/>
</dbReference>
<dbReference type="NCBIfam" id="TIGR04432">
    <property type="entry name" value="rSAM_Cfr"/>
    <property type="match status" value="1"/>
</dbReference>
<dbReference type="PANTHER" id="PTHR30544">
    <property type="entry name" value="23S RRNA METHYLTRANSFERASE"/>
    <property type="match status" value="1"/>
</dbReference>
<dbReference type="PANTHER" id="PTHR30544:SF5">
    <property type="entry name" value="RADICAL SAM CORE DOMAIN-CONTAINING PROTEIN"/>
    <property type="match status" value="1"/>
</dbReference>
<dbReference type="Pfam" id="PF04055">
    <property type="entry name" value="Radical_SAM"/>
    <property type="match status" value="1"/>
</dbReference>
<dbReference type="Pfam" id="PF21016">
    <property type="entry name" value="RlmN_N"/>
    <property type="match status" value="1"/>
</dbReference>
<dbReference type="PIRSF" id="PIRSF006004">
    <property type="entry name" value="CHP00048"/>
    <property type="match status" value="1"/>
</dbReference>
<dbReference type="SFLD" id="SFLDF00275">
    <property type="entry name" value="adenosine_C2_methyltransferase"/>
    <property type="match status" value="1"/>
</dbReference>
<dbReference type="SFLD" id="SFLDF00296">
    <property type="entry name" value="adenosine_C8_methyltransferase"/>
    <property type="match status" value="1"/>
</dbReference>
<dbReference type="SFLD" id="SFLDG01062">
    <property type="entry name" value="methyltransferase_(Class_A)"/>
    <property type="match status" value="1"/>
</dbReference>
<dbReference type="SFLD" id="SFLDS00029">
    <property type="entry name" value="Radical_SAM"/>
    <property type="match status" value="1"/>
</dbReference>
<dbReference type="SUPFAM" id="SSF102114">
    <property type="entry name" value="Radical SAM enzymes"/>
    <property type="match status" value="1"/>
</dbReference>
<dbReference type="PROSITE" id="PS51918">
    <property type="entry name" value="RADICAL_SAM"/>
    <property type="match status" value="1"/>
</dbReference>
<evidence type="ECO:0000255" key="1">
    <source>
        <dbReference type="HAMAP-Rule" id="MF_01873"/>
    </source>
</evidence>
<evidence type="ECO:0000255" key="2">
    <source>
        <dbReference type="PROSITE-ProRule" id="PRU01266"/>
    </source>
</evidence>
<gene>
    <name evidence="1" type="primary">cfr</name>
    <name type="ordered locus">ABC1074</name>
</gene>
<feature type="chain" id="PRO_0000350033" description="Ribosomal RNA large subunit methyltransferase Cfr">
    <location>
        <begin position="1"/>
        <end position="350"/>
    </location>
</feature>
<feature type="domain" description="Radical SAM core" evidence="2">
    <location>
        <begin position="99"/>
        <end position="333"/>
    </location>
</feature>
<feature type="active site" description="Proton acceptor" evidence="1">
    <location>
        <position position="92"/>
    </location>
</feature>
<feature type="active site" description="S-methylcysteine intermediate" evidence="1">
    <location>
        <position position="338"/>
    </location>
</feature>
<feature type="binding site" evidence="1">
    <location>
        <position position="113"/>
    </location>
    <ligand>
        <name>[4Fe-4S] cluster</name>
        <dbReference type="ChEBI" id="CHEBI:49883"/>
        <note>4Fe-4S-S-AdoMet</note>
    </ligand>
</feature>
<feature type="binding site" evidence="1">
    <location>
        <position position="117"/>
    </location>
    <ligand>
        <name>[4Fe-4S] cluster</name>
        <dbReference type="ChEBI" id="CHEBI:49883"/>
        <note>4Fe-4S-S-AdoMet</note>
    </ligand>
</feature>
<feature type="binding site" evidence="1">
    <location>
        <position position="120"/>
    </location>
    <ligand>
        <name>[4Fe-4S] cluster</name>
        <dbReference type="ChEBI" id="CHEBI:49883"/>
        <note>4Fe-4S-S-AdoMet</note>
    </ligand>
</feature>
<feature type="binding site" evidence="1">
    <location>
        <begin position="159"/>
        <end position="160"/>
    </location>
    <ligand>
        <name>S-adenosyl-L-methionine</name>
        <dbReference type="ChEBI" id="CHEBI:59789"/>
    </ligand>
</feature>
<feature type="binding site" evidence="1">
    <location>
        <position position="190"/>
    </location>
    <ligand>
        <name>S-adenosyl-L-methionine</name>
        <dbReference type="ChEBI" id="CHEBI:59789"/>
    </ligand>
</feature>
<feature type="binding site" evidence="1">
    <location>
        <begin position="213"/>
        <end position="215"/>
    </location>
    <ligand>
        <name>S-adenosyl-L-methionine</name>
        <dbReference type="ChEBI" id="CHEBI:59789"/>
    </ligand>
</feature>
<feature type="binding site" evidence="1">
    <location>
        <position position="293"/>
    </location>
    <ligand>
        <name>S-adenosyl-L-methionine</name>
        <dbReference type="ChEBI" id="CHEBI:59789"/>
    </ligand>
</feature>
<feature type="disulfide bond" description="(transient)" evidence="1">
    <location>
        <begin position="106"/>
        <end position="338"/>
    </location>
</feature>
<proteinExistence type="inferred from homology"/>
<keyword id="KW-0004">4Fe-4S</keyword>
<keyword id="KW-0046">Antibiotic resistance</keyword>
<keyword id="KW-0963">Cytoplasm</keyword>
<keyword id="KW-1015">Disulfide bond</keyword>
<keyword id="KW-0408">Iron</keyword>
<keyword id="KW-0411">Iron-sulfur</keyword>
<keyword id="KW-0479">Metal-binding</keyword>
<keyword id="KW-0489">Methyltransferase</keyword>
<keyword id="KW-1185">Reference proteome</keyword>
<keyword id="KW-0698">rRNA processing</keyword>
<keyword id="KW-0949">S-adenosyl-L-methionine</keyword>
<keyword id="KW-0808">Transferase</keyword>
<protein>
    <recommendedName>
        <fullName evidence="1">Ribosomal RNA large subunit methyltransferase Cfr</fullName>
        <ecNumber evidence="1">2.1.1.224</ecNumber>
    </recommendedName>
    <alternativeName>
        <fullName evidence="1">23S rRNA (adenine(2503)-C(8))-methyltransferase</fullName>
    </alternativeName>
    <alternativeName>
        <fullName evidence="1">23S rRNA m8A2503 methyltransferase</fullName>
    </alternativeName>
</protein>
<comment type="function">
    <text evidence="1">Specifically methylates position 8 of adenine 2503 in 23S rRNA. Confers resistance to some classes of antibiotics.</text>
</comment>
<comment type="catalytic activity">
    <reaction evidence="1">
        <text>adenosine(2503) in 23S rRNA + 2 reduced [2Fe-2S]-[ferredoxin] + 2 S-adenosyl-L-methionine = 8-methyladenosine(2503) in 23S rRNA + 5'-deoxyadenosine + L-methionine + 2 oxidized [2Fe-2S]-[ferredoxin] + S-adenosyl-L-homocysteine</text>
        <dbReference type="Rhea" id="RHEA:42632"/>
        <dbReference type="Rhea" id="RHEA-COMP:10000"/>
        <dbReference type="Rhea" id="RHEA-COMP:10001"/>
        <dbReference type="Rhea" id="RHEA-COMP:10152"/>
        <dbReference type="Rhea" id="RHEA-COMP:10153"/>
        <dbReference type="ChEBI" id="CHEBI:17319"/>
        <dbReference type="ChEBI" id="CHEBI:33737"/>
        <dbReference type="ChEBI" id="CHEBI:33738"/>
        <dbReference type="ChEBI" id="CHEBI:57844"/>
        <dbReference type="ChEBI" id="CHEBI:57856"/>
        <dbReference type="ChEBI" id="CHEBI:59789"/>
        <dbReference type="ChEBI" id="CHEBI:74411"/>
        <dbReference type="ChEBI" id="CHEBI:74543"/>
        <dbReference type="EC" id="2.1.1.224"/>
    </reaction>
</comment>
<comment type="cofactor">
    <cofactor evidence="1">
        <name>[4Fe-4S] cluster</name>
        <dbReference type="ChEBI" id="CHEBI:49883"/>
    </cofactor>
    <text evidence="1">Binds 1 [4Fe-4S] cluster. The cluster is coordinated with 3 cysteines and an exchangeable S-adenosyl-L-methionine.</text>
</comment>
<comment type="subcellular location">
    <subcellularLocation>
        <location evidence="1">Cytoplasm</location>
    </subcellularLocation>
</comment>
<comment type="miscellaneous">
    <text evidence="1">Reaction proceeds by a ping-pong mechanism involving intermediate methylation of a conserved cysteine residue.</text>
</comment>
<comment type="similarity">
    <text evidence="1">Belongs to the radical SAM superfamily. RlmN family. Cfr subfamily.</text>
</comment>
<reference key="1">
    <citation type="submission" date="2003-10" db="EMBL/GenBank/DDBJ databases">
        <title>The complete genome sequence of the alkaliphilic Bacillus clausii KSM-K16.</title>
        <authorList>
            <person name="Takaki Y."/>
            <person name="Kageyama Y."/>
            <person name="Shimamura S."/>
            <person name="Suzuki H."/>
            <person name="Nishi S."/>
            <person name="Hatada Y."/>
            <person name="Kawai S."/>
            <person name="Ito S."/>
            <person name="Horikoshi K."/>
        </authorList>
    </citation>
    <scope>NUCLEOTIDE SEQUENCE [LARGE SCALE GENOMIC DNA]</scope>
    <source>
        <strain>KSM-K16</strain>
    </source>
</reference>